<sequence length="313" mass="34678">MKKKLIIGTRSSPLALWQADFTQAELSKHFPDLEIELKLVKTTGDVLLDSPLSKIGDMGLFTKDIEKHLISGEIDLAVHSLKDVPTETPEGLMLSAFTEREDTRDVIISKNGESLKTLKQDAKIATSSLRRTSQLLSMRPDFQMGDIRGNLNTRFKKFDESDFDAMMLAYAGVHRLNFGDRISEILPHEVMLPAVGQGALGIETRVDDEATKEIVSVMNNVNTEFCTKAERALLRHLQGGCQIPIGSYASLKNGNLHLLAYVGSVDGKRTIRNEITKENCTLPEQAEQAGIELAEELLKQGANEILAEIRKTC</sequence>
<proteinExistence type="inferred from homology"/>
<evidence type="ECO:0000255" key="1">
    <source>
        <dbReference type="HAMAP-Rule" id="MF_00260"/>
    </source>
</evidence>
<accession>B3EPK0</accession>
<dbReference type="EC" id="2.5.1.61" evidence="1"/>
<dbReference type="EMBL" id="CP001101">
    <property type="protein sequence ID" value="ACE03878.1"/>
    <property type="molecule type" value="Genomic_DNA"/>
</dbReference>
<dbReference type="SMR" id="B3EPK0"/>
<dbReference type="STRING" id="331678.Cphamn1_0933"/>
<dbReference type="KEGG" id="cpb:Cphamn1_0933"/>
<dbReference type="eggNOG" id="COG0181">
    <property type="taxonomic scope" value="Bacteria"/>
</dbReference>
<dbReference type="HOGENOM" id="CLU_019704_0_2_10"/>
<dbReference type="OrthoDB" id="9810298at2"/>
<dbReference type="UniPathway" id="UPA00251">
    <property type="reaction ID" value="UER00319"/>
</dbReference>
<dbReference type="UniPathway" id="UPA00668"/>
<dbReference type="GO" id="GO:0005737">
    <property type="term" value="C:cytoplasm"/>
    <property type="evidence" value="ECO:0007669"/>
    <property type="project" value="TreeGrafter"/>
</dbReference>
<dbReference type="GO" id="GO:0004418">
    <property type="term" value="F:hydroxymethylbilane synthase activity"/>
    <property type="evidence" value="ECO:0007669"/>
    <property type="project" value="UniProtKB-UniRule"/>
</dbReference>
<dbReference type="GO" id="GO:0015995">
    <property type="term" value="P:chlorophyll biosynthetic process"/>
    <property type="evidence" value="ECO:0007669"/>
    <property type="project" value="UniProtKB-UniPathway"/>
</dbReference>
<dbReference type="GO" id="GO:0006782">
    <property type="term" value="P:protoporphyrinogen IX biosynthetic process"/>
    <property type="evidence" value="ECO:0007669"/>
    <property type="project" value="UniProtKB-UniRule"/>
</dbReference>
<dbReference type="CDD" id="cd13646">
    <property type="entry name" value="PBP2_EcHMBS_like"/>
    <property type="match status" value="1"/>
</dbReference>
<dbReference type="FunFam" id="3.30.160.40:FF:000002">
    <property type="entry name" value="Porphobilinogen deaminase"/>
    <property type="match status" value="1"/>
</dbReference>
<dbReference type="FunFam" id="3.40.190.10:FF:000004">
    <property type="entry name" value="Porphobilinogen deaminase"/>
    <property type="match status" value="1"/>
</dbReference>
<dbReference type="FunFam" id="3.40.190.10:FF:000005">
    <property type="entry name" value="Porphobilinogen deaminase"/>
    <property type="match status" value="1"/>
</dbReference>
<dbReference type="Gene3D" id="3.40.190.10">
    <property type="entry name" value="Periplasmic binding protein-like II"/>
    <property type="match status" value="2"/>
</dbReference>
<dbReference type="Gene3D" id="3.30.160.40">
    <property type="entry name" value="Porphobilinogen deaminase, C-terminal domain"/>
    <property type="match status" value="1"/>
</dbReference>
<dbReference type="HAMAP" id="MF_00260">
    <property type="entry name" value="Porphobil_deam"/>
    <property type="match status" value="1"/>
</dbReference>
<dbReference type="InterPro" id="IPR000860">
    <property type="entry name" value="HemC"/>
</dbReference>
<dbReference type="InterPro" id="IPR022419">
    <property type="entry name" value="Porphobilin_deaminase_cofac_BS"/>
</dbReference>
<dbReference type="InterPro" id="IPR022417">
    <property type="entry name" value="Porphobilin_deaminase_N"/>
</dbReference>
<dbReference type="InterPro" id="IPR022418">
    <property type="entry name" value="Porphobilinogen_deaminase_C"/>
</dbReference>
<dbReference type="InterPro" id="IPR036803">
    <property type="entry name" value="Porphobilinogen_deaminase_C_sf"/>
</dbReference>
<dbReference type="NCBIfam" id="TIGR00212">
    <property type="entry name" value="hemC"/>
    <property type="match status" value="1"/>
</dbReference>
<dbReference type="PANTHER" id="PTHR11557">
    <property type="entry name" value="PORPHOBILINOGEN DEAMINASE"/>
    <property type="match status" value="1"/>
</dbReference>
<dbReference type="PANTHER" id="PTHR11557:SF0">
    <property type="entry name" value="PORPHOBILINOGEN DEAMINASE"/>
    <property type="match status" value="1"/>
</dbReference>
<dbReference type="Pfam" id="PF01379">
    <property type="entry name" value="Porphobil_deam"/>
    <property type="match status" value="1"/>
</dbReference>
<dbReference type="Pfam" id="PF03900">
    <property type="entry name" value="Porphobil_deamC"/>
    <property type="match status" value="1"/>
</dbReference>
<dbReference type="PIRSF" id="PIRSF001438">
    <property type="entry name" value="4pyrrol_synth_OHMeBilane_synth"/>
    <property type="match status" value="1"/>
</dbReference>
<dbReference type="PRINTS" id="PR00151">
    <property type="entry name" value="PORPHBDMNASE"/>
</dbReference>
<dbReference type="SUPFAM" id="SSF53850">
    <property type="entry name" value="Periplasmic binding protein-like II"/>
    <property type="match status" value="1"/>
</dbReference>
<dbReference type="SUPFAM" id="SSF54782">
    <property type="entry name" value="Porphobilinogen deaminase (hydroxymethylbilane synthase), C-terminal domain"/>
    <property type="match status" value="1"/>
</dbReference>
<dbReference type="PROSITE" id="PS00533">
    <property type="entry name" value="PORPHOBILINOGEN_DEAM"/>
    <property type="match status" value="1"/>
</dbReference>
<comment type="function">
    <text evidence="1">Tetrapolymerization of the monopyrrole PBG into the hydroxymethylbilane pre-uroporphyrinogen in several discrete steps.</text>
</comment>
<comment type="catalytic activity">
    <reaction evidence="1">
        <text>4 porphobilinogen + H2O = hydroxymethylbilane + 4 NH4(+)</text>
        <dbReference type="Rhea" id="RHEA:13185"/>
        <dbReference type="ChEBI" id="CHEBI:15377"/>
        <dbReference type="ChEBI" id="CHEBI:28938"/>
        <dbReference type="ChEBI" id="CHEBI:57845"/>
        <dbReference type="ChEBI" id="CHEBI:58126"/>
        <dbReference type="EC" id="2.5.1.61"/>
    </reaction>
</comment>
<comment type="cofactor">
    <cofactor evidence="1">
        <name>dipyrromethane</name>
        <dbReference type="ChEBI" id="CHEBI:60342"/>
    </cofactor>
    <text evidence="1">Binds 1 dipyrromethane group covalently.</text>
</comment>
<comment type="pathway">
    <text evidence="1">Porphyrin-containing compound metabolism; protoporphyrin-IX biosynthesis; coproporphyrinogen-III from 5-aminolevulinate: step 2/4.</text>
</comment>
<comment type="pathway">
    <text evidence="1">Porphyrin-containing compound metabolism; chlorophyll biosynthesis.</text>
</comment>
<comment type="subunit">
    <text evidence="1">Monomer.</text>
</comment>
<comment type="miscellaneous">
    <text evidence="1">The porphobilinogen subunits are added to the dipyrromethane group.</text>
</comment>
<comment type="similarity">
    <text evidence="1">Belongs to the HMBS family.</text>
</comment>
<protein>
    <recommendedName>
        <fullName evidence="1">Porphobilinogen deaminase</fullName>
        <shortName evidence="1">PBG</shortName>
        <ecNumber evidence="1">2.5.1.61</ecNumber>
    </recommendedName>
    <alternativeName>
        <fullName evidence="1">Hydroxymethylbilane synthase</fullName>
        <shortName evidence="1">HMBS</shortName>
    </alternativeName>
    <alternativeName>
        <fullName evidence="1">Pre-uroporphyrinogen synthase</fullName>
    </alternativeName>
</protein>
<keyword id="KW-0149">Chlorophyll biosynthesis</keyword>
<keyword id="KW-0627">Porphyrin biosynthesis</keyword>
<keyword id="KW-0808">Transferase</keyword>
<feature type="chain" id="PRO_1000114142" description="Porphobilinogen deaminase">
    <location>
        <begin position="1"/>
        <end position="313"/>
    </location>
</feature>
<feature type="modified residue" description="S-(dipyrrolylmethanemethyl)cysteine" evidence="1">
    <location>
        <position position="241"/>
    </location>
</feature>
<organism>
    <name type="scientific">Chlorobium phaeobacteroides (strain BS1)</name>
    <dbReference type="NCBI Taxonomy" id="331678"/>
    <lineage>
        <taxon>Bacteria</taxon>
        <taxon>Pseudomonadati</taxon>
        <taxon>Chlorobiota</taxon>
        <taxon>Chlorobiia</taxon>
        <taxon>Chlorobiales</taxon>
        <taxon>Chlorobiaceae</taxon>
        <taxon>Chlorobium/Pelodictyon group</taxon>
        <taxon>Chlorobium</taxon>
    </lineage>
</organism>
<gene>
    <name evidence="1" type="primary">hemC</name>
    <name type="ordered locus">Cphamn1_0933</name>
</gene>
<reference key="1">
    <citation type="submission" date="2008-06" db="EMBL/GenBank/DDBJ databases">
        <title>Complete sequence of Chlorobium phaeobacteroides BS1.</title>
        <authorList>
            <consortium name="US DOE Joint Genome Institute"/>
            <person name="Lucas S."/>
            <person name="Copeland A."/>
            <person name="Lapidus A."/>
            <person name="Glavina del Rio T."/>
            <person name="Dalin E."/>
            <person name="Tice H."/>
            <person name="Bruce D."/>
            <person name="Goodwin L."/>
            <person name="Pitluck S."/>
            <person name="Schmutz J."/>
            <person name="Larimer F."/>
            <person name="Land M."/>
            <person name="Hauser L."/>
            <person name="Kyrpides N."/>
            <person name="Ovchinnikova G."/>
            <person name="Li T."/>
            <person name="Liu Z."/>
            <person name="Zhao F."/>
            <person name="Overmann J."/>
            <person name="Bryant D.A."/>
            <person name="Richardson P."/>
        </authorList>
    </citation>
    <scope>NUCLEOTIDE SEQUENCE [LARGE SCALE GENOMIC DNA]</scope>
    <source>
        <strain>BS1</strain>
    </source>
</reference>
<name>HEM3_CHLPB</name>